<feature type="chain" id="PRO_1000086786" description="Small ribosomal subunit protein uS15">
    <location>
        <begin position="1"/>
        <end position="89"/>
    </location>
</feature>
<protein>
    <recommendedName>
        <fullName evidence="1">Small ribosomal subunit protein uS15</fullName>
    </recommendedName>
    <alternativeName>
        <fullName evidence="2">30S ribosomal protein S15</fullName>
    </alternativeName>
</protein>
<reference key="1">
    <citation type="journal article" date="2008" name="Proc. Natl. Acad. Sci. U.S.A.">
        <title>Niche adaptation and genome expansion in the chlorophyll d-producing cyanobacterium Acaryochloris marina.</title>
        <authorList>
            <person name="Swingley W.D."/>
            <person name="Chen M."/>
            <person name="Cheung P.C."/>
            <person name="Conrad A.L."/>
            <person name="Dejesa L.C."/>
            <person name="Hao J."/>
            <person name="Honchak B.M."/>
            <person name="Karbach L.E."/>
            <person name="Kurdoglu A."/>
            <person name="Lahiri S."/>
            <person name="Mastrian S.D."/>
            <person name="Miyashita H."/>
            <person name="Page L."/>
            <person name="Ramakrishna P."/>
            <person name="Satoh S."/>
            <person name="Sattley W.M."/>
            <person name="Shimada Y."/>
            <person name="Taylor H.L."/>
            <person name="Tomo T."/>
            <person name="Tsuchiya T."/>
            <person name="Wang Z.T."/>
            <person name="Raymond J."/>
            <person name="Mimuro M."/>
            <person name="Blankenship R.E."/>
            <person name="Touchman J.W."/>
        </authorList>
    </citation>
    <scope>NUCLEOTIDE SEQUENCE [LARGE SCALE GENOMIC DNA]</scope>
    <source>
        <strain>MBIC 11017</strain>
    </source>
</reference>
<name>RS15_ACAM1</name>
<gene>
    <name evidence="1" type="primary">rpsO</name>
    <name evidence="1" type="synonym">rps15</name>
    <name type="ordered locus">AM1_5420</name>
</gene>
<sequence length="89" mass="10397">MALLQEKKHEIINAYQVHETDTGSADVQVAMLTERISKLSEHLKTNKKDHSSRRGLLKMIGQRKRLLTYIMKKDQAHYRELIKRLGIRG</sequence>
<comment type="function">
    <text evidence="1">One of the primary rRNA binding proteins, it binds directly to 16S rRNA where it helps nucleate assembly of the platform of the 30S subunit by binding and bridging several RNA helices of the 16S rRNA.</text>
</comment>
<comment type="function">
    <text evidence="1">Forms an intersubunit bridge (bridge B4) with the 23S rRNA of the 50S subunit in the ribosome.</text>
</comment>
<comment type="subunit">
    <text evidence="1">Part of the 30S ribosomal subunit. Forms a bridge to the 50S subunit in the 70S ribosome, contacting the 23S rRNA.</text>
</comment>
<comment type="similarity">
    <text evidence="1">Belongs to the universal ribosomal protein uS15 family.</text>
</comment>
<organism>
    <name type="scientific">Acaryochloris marina (strain MBIC 11017)</name>
    <dbReference type="NCBI Taxonomy" id="329726"/>
    <lineage>
        <taxon>Bacteria</taxon>
        <taxon>Bacillati</taxon>
        <taxon>Cyanobacteriota</taxon>
        <taxon>Cyanophyceae</taxon>
        <taxon>Acaryochloridales</taxon>
        <taxon>Acaryochloridaceae</taxon>
        <taxon>Acaryochloris</taxon>
    </lineage>
</organism>
<accession>B0CBX6</accession>
<evidence type="ECO:0000255" key="1">
    <source>
        <dbReference type="HAMAP-Rule" id="MF_01343"/>
    </source>
</evidence>
<evidence type="ECO:0000305" key="2"/>
<dbReference type="EMBL" id="CP000828">
    <property type="protein sequence ID" value="ABW30376.1"/>
    <property type="molecule type" value="Genomic_DNA"/>
</dbReference>
<dbReference type="RefSeq" id="WP_012165616.1">
    <property type="nucleotide sequence ID" value="NC_009925.1"/>
</dbReference>
<dbReference type="SMR" id="B0CBX6"/>
<dbReference type="STRING" id="329726.AM1_5420"/>
<dbReference type="KEGG" id="amr:AM1_5420"/>
<dbReference type="eggNOG" id="COG0184">
    <property type="taxonomic scope" value="Bacteria"/>
</dbReference>
<dbReference type="HOGENOM" id="CLU_148518_0_0_3"/>
<dbReference type="OrthoDB" id="9799262at2"/>
<dbReference type="Proteomes" id="UP000000268">
    <property type="component" value="Chromosome"/>
</dbReference>
<dbReference type="GO" id="GO:0022627">
    <property type="term" value="C:cytosolic small ribosomal subunit"/>
    <property type="evidence" value="ECO:0007669"/>
    <property type="project" value="TreeGrafter"/>
</dbReference>
<dbReference type="GO" id="GO:0019843">
    <property type="term" value="F:rRNA binding"/>
    <property type="evidence" value="ECO:0007669"/>
    <property type="project" value="UniProtKB-UniRule"/>
</dbReference>
<dbReference type="GO" id="GO:0003735">
    <property type="term" value="F:structural constituent of ribosome"/>
    <property type="evidence" value="ECO:0007669"/>
    <property type="project" value="InterPro"/>
</dbReference>
<dbReference type="GO" id="GO:0006412">
    <property type="term" value="P:translation"/>
    <property type="evidence" value="ECO:0007669"/>
    <property type="project" value="UniProtKB-UniRule"/>
</dbReference>
<dbReference type="CDD" id="cd00353">
    <property type="entry name" value="Ribosomal_S15p_S13e"/>
    <property type="match status" value="1"/>
</dbReference>
<dbReference type="FunFam" id="1.10.287.10:FF:000002">
    <property type="entry name" value="30S ribosomal protein S15"/>
    <property type="match status" value="1"/>
</dbReference>
<dbReference type="Gene3D" id="6.10.250.3130">
    <property type="match status" value="1"/>
</dbReference>
<dbReference type="Gene3D" id="1.10.287.10">
    <property type="entry name" value="S15/NS1, RNA-binding"/>
    <property type="match status" value="1"/>
</dbReference>
<dbReference type="HAMAP" id="MF_01343_B">
    <property type="entry name" value="Ribosomal_uS15_B"/>
    <property type="match status" value="1"/>
</dbReference>
<dbReference type="InterPro" id="IPR000589">
    <property type="entry name" value="Ribosomal_uS15"/>
</dbReference>
<dbReference type="InterPro" id="IPR005290">
    <property type="entry name" value="Ribosomal_uS15_bac-type"/>
</dbReference>
<dbReference type="InterPro" id="IPR009068">
    <property type="entry name" value="uS15_NS1_RNA-bd_sf"/>
</dbReference>
<dbReference type="NCBIfam" id="TIGR00952">
    <property type="entry name" value="S15_bact"/>
    <property type="match status" value="1"/>
</dbReference>
<dbReference type="PANTHER" id="PTHR23321">
    <property type="entry name" value="RIBOSOMAL PROTEIN S15, BACTERIAL AND ORGANELLAR"/>
    <property type="match status" value="1"/>
</dbReference>
<dbReference type="PANTHER" id="PTHR23321:SF26">
    <property type="entry name" value="SMALL RIBOSOMAL SUBUNIT PROTEIN US15M"/>
    <property type="match status" value="1"/>
</dbReference>
<dbReference type="Pfam" id="PF00312">
    <property type="entry name" value="Ribosomal_S15"/>
    <property type="match status" value="1"/>
</dbReference>
<dbReference type="SMART" id="SM01387">
    <property type="entry name" value="Ribosomal_S15"/>
    <property type="match status" value="1"/>
</dbReference>
<dbReference type="SUPFAM" id="SSF47060">
    <property type="entry name" value="S15/NS1 RNA-binding domain"/>
    <property type="match status" value="1"/>
</dbReference>
<dbReference type="PROSITE" id="PS00362">
    <property type="entry name" value="RIBOSOMAL_S15"/>
    <property type="match status" value="1"/>
</dbReference>
<keyword id="KW-1185">Reference proteome</keyword>
<keyword id="KW-0687">Ribonucleoprotein</keyword>
<keyword id="KW-0689">Ribosomal protein</keyword>
<keyword id="KW-0694">RNA-binding</keyword>
<keyword id="KW-0699">rRNA-binding</keyword>
<proteinExistence type="inferred from homology"/>